<feature type="transit peptide" description="Mitochondrion" evidence="4">
    <location>
        <begin position="1"/>
        <end position="57"/>
    </location>
</feature>
<feature type="chain" id="PRO_0000384428" description="Small ribosomal subunit protein uS15m">
    <location>
        <begin position="58"/>
        <end position="257"/>
    </location>
</feature>
<feature type="region of interest" description="Disordered" evidence="5">
    <location>
        <begin position="228"/>
        <end position="257"/>
    </location>
</feature>
<feature type="compositionally biased region" description="Basic and acidic residues" evidence="5">
    <location>
        <begin position="234"/>
        <end position="243"/>
    </location>
</feature>
<comment type="subunit">
    <text evidence="1 3">Component of the mitochondrial ribosome small subunit (28S) which comprises a 12S rRNA and about 30 distinct proteins (By similarity). Interacts with METTL17 (By similarity).</text>
</comment>
<comment type="subcellular location">
    <subcellularLocation>
        <location evidence="2">Mitochondrion matrix</location>
    </subcellularLocation>
</comment>
<comment type="similarity">
    <text evidence="6">Belongs to the universal ribosomal protein uS15 family.</text>
</comment>
<proteinExistence type="evidence at transcript level"/>
<protein>
    <recommendedName>
        <fullName evidence="6">Small ribosomal subunit protein uS15m</fullName>
    </recommendedName>
    <alternativeName>
        <fullName>28S ribosomal protein S15, mitochondrial</fullName>
        <shortName>MRP-S15</shortName>
        <shortName>S15mt</shortName>
    </alternativeName>
</protein>
<keyword id="KW-0496">Mitochondrion</keyword>
<keyword id="KW-1185">Reference proteome</keyword>
<keyword id="KW-0687">Ribonucleoprotein</keyword>
<keyword id="KW-0689">Ribosomal protein</keyword>
<keyword id="KW-0809">Transit peptide</keyword>
<name>RT15_RAT</name>
<sequence>MLRAAWRALSSVRVQAVTQAPVPALRARSSASLPSARCGLQTPSLLNAARAYAVQKPVQAKQDDEPASSTFIKEYKNIIPNMEKVDDVVKRILSLEMASRKEKLKIKREQLMNKIAENPEDYRTLEARIVALTVKIRNYEEHMQKHRKDKVHKRHLLMSIDQRKKFLRLLRQTNYDVFEKTCKELGVEYALPPLHFQRVHRRFLAKKALCIQVFQEVQKLKKQRMALKAAAAAAKKEKRERVPENPSNALPEKTKEN</sequence>
<reference key="1">
    <citation type="journal article" date="2004" name="Genome Res.">
        <title>The status, quality, and expansion of the NIH full-length cDNA project: the Mammalian Gene Collection (MGC).</title>
        <authorList>
            <consortium name="The MGC Project Team"/>
        </authorList>
    </citation>
    <scope>NUCLEOTIDE SEQUENCE [LARGE SCALE MRNA]</scope>
    <source>
        <tissue>Lung</tissue>
    </source>
</reference>
<evidence type="ECO:0000250" key="1">
    <source>
        <dbReference type="UniProtKB" id="P82913"/>
    </source>
</evidence>
<evidence type="ECO:0000250" key="2">
    <source>
        <dbReference type="UniProtKB" id="P82914"/>
    </source>
</evidence>
<evidence type="ECO:0000250" key="3">
    <source>
        <dbReference type="UniProtKB" id="Q9DC71"/>
    </source>
</evidence>
<evidence type="ECO:0000255" key="4"/>
<evidence type="ECO:0000256" key="5">
    <source>
        <dbReference type="SAM" id="MobiDB-lite"/>
    </source>
</evidence>
<evidence type="ECO:0000305" key="6"/>
<dbReference type="EMBL" id="BC083856">
    <property type="protein sequence ID" value="AAH83856.1"/>
    <property type="molecule type" value="mRNA"/>
</dbReference>
<dbReference type="RefSeq" id="NP_001007654.1">
    <property type="nucleotide sequence ID" value="NM_001007653.1"/>
</dbReference>
<dbReference type="SMR" id="Q5XI37"/>
<dbReference type="FunCoup" id="Q5XI37">
    <property type="interactions" value="1482"/>
</dbReference>
<dbReference type="STRING" id="10116.ENSRNOP00000011565"/>
<dbReference type="iPTMnet" id="Q5XI37"/>
<dbReference type="PhosphoSitePlus" id="Q5XI37"/>
<dbReference type="PaxDb" id="10116-ENSRNOP00000011565"/>
<dbReference type="Ensembl" id="ENSRNOT00000011565.4">
    <property type="protein sequence ID" value="ENSRNOP00000011565.3"/>
    <property type="gene ID" value="ENSRNOG00000008279.4"/>
</dbReference>
<dbReference type="GeneID" id="298517"/>
<dbReference type="KEGG" id="rno:298517"/>
<dbReference type="AGR" id="RGD:1359675"/>
<dbReference type="CTD" id="64960"/>
<dbReference type="RGD" id="1359675">
    <property type="gene designation" value="Mrps15"/>
</dbReference>
<dbReference type="eggNOG" id="KOG2815">
    <property type="taxonomic scope" value="Eukaryota"/>
</dbReference>
<dbReference type="GeneTree" id="ENSGT00390000001737"/>
<dbReference type="HOGENOM" id="CLU_094627_0_0_1"/>
<dbReference type="InParanoid" id="Q5XI37"/>
<dbReference type="OMA" id="RYLQMSI"/>
<dbReference type="OrthoDB" id="441444at2759"/>
<dbReference type="PhylomeDB" id="Q5XI37"/>
<dbReference type="TreeFam" id="TF319038"/>
<dbReference type="Reactome" id="R-RNO-5389840">
    <property type="pathway name" value="Mitochondrial translation elongation"/>
</dbReference>
<dbReference type="Reactome" id="R-RNO-5419276">
    <property type="pathway name" value="Mitochondrial translation termination"/>
</dbReference>
<dbReference type="PRO" id="PR:Q5XI37"/>
<dbReference type="Proteomes" id="UP000002494">
    <property type="component" value="Chromosome 5"/>
</dbReference>
<dbReference type="Bgee" id="ENSRNOG00000008279">
    <property type="expression patterns" value="Expressed in quadriceps femoris and 20 other cell types or tissues"/>
</dbReference>
<dbReference type="GO" id="GO:0005759">
    <property type="term" value="C:mitochondrial matrix"/>
    <property type="evidence" value="ECO:0000250"/>
    <property type="project" value="UniProtKB"/>
</dbReference>
<dbReference type="GO" id="GO:0005761">
    <property type="term" value="C:mitochondrial ribosome"/>
    <property type="evidence" value="ECO:0000266"/>
    <property type="project" value="RGD"/>
</dbReference>
<dbReference type="GO" id="GO:0005763">
    <property type="term" value="C:mitochondrial small ribosomal subunit"/>
    <property type="evidence" value="ECO:0000250"/>
    <property type="project" value="UniProtKB"/>
</dbReference>
<dbReference type="GO" id="GO:0005730">
    <property type="term" value="C:nucleolus"/>
    <property type="evidence" value="ECO:0007669"/>
    <property type="project" value="Ensembl"/>
</dbReference>
<dbReference type="GO" id="GO:0005654">
    <property type="term" value="C:nucleoplasm"/>
    <property type="evidence" value="ECO:0007669"/>
    <property type="project" value="Ensembl"/>
</dbReference>
<dbReference type="GO" id="GO:0003735">
    <property type="term" value="F:structural constituent of ribosome"/>
    <property type="evidence" value="ECO:0007669"/>
    <property type="project" value="InterPro"/>
</dbReference>
<dbReference type="GO" id="GO:0006412">
    <property type="term" value="P:translation"/>
    <property type="evidence" value="ECO:0007669"/>
    <property type="project" value="InterPro"/>
</dbReference>
<dbReference type="CDD" id="cd00353">
    <property type="entry name" value="Ribosomal_S15p_S13e"/>
    <property type="match status" value="1"/>
</dbReference>
<dbReference type="FunFam" id="1.10.287.10:FF:000015">
    <property type="entry name" value="Mitochondrial ribosomal protein S15"/>
    <property type="match status" value="1"/>
</dbReference>
<dbReference type="Gene3D" id="1.10.287.10">
    <property type="entry name" value="S15/NS1, RNA-binding"/>
    <property type="match status" value="1"/>
</dbReference>
<dbReference type="HAMAP" id="MF_01343_B">
    <property type="entry name" value="Ribosomal_uS15_B"/>
    <property type="match status" value="1"/>
</dbReference>
<dbReference type="InterPro" id="IPR000589">
    <property type="entry name" value="Ribosomal_uS15"/>
</dbReference>
<dbReference type="InterPro" id="IPR005290">
    <property type="entry name" value="Ribosomal_uS15_bac-type"/>
</dbReference>
<dbReference type="InterPro" id="IPR009068">
    <property type="entry name" value="uS15_NS1_RNA-bd_sf"/>
</dbReference>
<dbReference type="InterPro" id="IPR052137">
    <property type="entry name" value="uS15_ribosomal"/>
</dbReference>
<dbReference type="PANTHER" id="PTHR46685">
    <property type="entry name" value="28S RIBOSOMAL PROTEIN S15, MITOCHONDRIAL"/>
    <property type="match status" value="1"/>
</dbReference>
<dbReference type="PANTHER" id="PTHR46685:SF1">
    <property type="entry name" value="SMALL RIBOSOMAL SUBUNIT PROTEIN US15M"/>
    <property type="match status" value="1"/>
</dbReference>
<dbReference type="Pfam" id="PF00312">
    <property type="entry name" value="Ribosomal_S15"/>
    <property type="match status" value="1"/>
</dbReference>
<dbReference type="SMART" id="SM01387">
    <property type="entry name" value="Ribosomal_S15"/>
    <property type="match status" value="1"/>
</dbReference>
<dbReference type="SUPFAM" id="SSF47060">
    <property type="entry name" value="S15/NS1 RNA-binding domain"/>
    <property type="match status" value="1"/>
</dbReference>
<organism>
    <name type="scientific">Rattus norvegicus</name>
    <name type="common">Rat</name>
    <dbReference type="NCBI Taxonomy" id="10116"/>
    <lineage>
        <taxon>Eukaryota</taxon>
        <taxon>Metazoa</taxon>
        <taxon>Chordata</taxon>
        <taxon>Craniata</taxon>
        <taxon>Vertebrata</taxon>
        <taxon>Euteleostomi</taxon>
        <taxon>Mammalia</taxon>
        <taxon>Eutheria</taxon>
        <taxon>Euarchontoglires</taxon>
        <taxon>Glires</taxon>
        <taxon>Rodentia</taxon>
        <taxon>Myomorpha</taxon>
        <taxon>Muroidea</taxon>
        <taxon>Muridae</taxon>
        <taxon>Murinae</taxon>
        <taxon>Rattus</taxon>
    </lineage>
</organism>
<accession>Q5XI37</accession>
<gene>
    <name type="primary">Mrps15</name>
</gene>